<feature type="chain" id="PRO_0000329517" description="Polyribonucleotide nucleotidyltransferase">
    <location>
        <begin position="1"/>
        <end position="704"/>
    </location>
</feature>
<feature type="domain" description="KH" evidence="1">
    <location>
        <begin position="552"/>
        <end position="611"/>
    </location>
</feature>
<feature type="domain" description="S1 motif" evidence="1">
    <location>
        <begin position="621"/>
        <end position="689"/>
    </location>
</feature>
<feature type="binding site" evidence="1">
    <location>
        <position position="485"/>
    </location>
    <ligand>
        <name>Mg(2+)</name>
        <dbReference type="ChEBI" id="CHEBI:18420"/>
    </ligand>
</feature>
<feature type="binding site" evidence="1">
    <location>
        <position position="491"/>
    </location>
    <ligand>
        <name>Mg(2+)</name>
        <dbReference type="ChEBI" id="CHEBI:18420"/>
    </ligand>
</feature>
<keyword id="KW-0963">Cytoplasm</keyword>
<keyword id="KW-0460">Magnesium</keyword>
<keyword id="KW-0479">Metal-binding</keyword>
<keyword id="KW-0548">Nucleotidyltransferase</keyword>
<keyword id="KW-1185">Reference proteome</keyword>
<keyword id="KW-0694">RNA-binding</keyword>
<keyword id="KW-0808">Transferase</keyword>
<organism>
    <name type="scientific">Halalkalibacterium halodurans (strain ATCC BAA-125 / DSM 18197 / FERM 7344 / JCM 9153 / C-125)</name>
    <name type="common">Bacillus halodurans</name>
    <dbReference type="NCBI Taxonomy" id="272558"/>
    <lineage>
        <taxon>Bacteria</taxon>
        <taxon>Bacillati</taxon>
        <taxon>Bacillota</taxon>
        <taxon>Bacilli</taxon>
        <taxon>Bacillales</taxon>
        <taxon>Bacillaceae</taxon>
        <taxon>Halalkalibacterium (ex Joshi et al. 2022)</taxon>
    </lineage>
</organism>
<dbReference type="EC" id="2.7.7.8" evidence="1"/>
<dbReference type="EMBL" id="BA000004">
    <property type="protein sequence ID" value="BAB06126.1"/>
    <property type="molecule type" value="Genomic_DNA"/>
</dbReference>
<dbReference type="PIR" id="G83950">
    <property type="entry name" value="G83950"/>
</dbReference>
<dbReference type="RefSeq" id="WP_010898560.1">
    <property type="nucleotide sequence ID" value="NC_002570.2"/>
</dbReference>
<dbReference type="SMR" id="Q9KA83"/>
<dbReference type="STRING" id="272558.gene:10728305"/>
<dbReference type="GeneID" id="87597927"/>
<dbReference type="KEGG" id="bha:BH2407"/>
<dbReference type="eggNOG" id="COG1185">
    <property type="taxonomic scope" value="Bacteria"/>
</dbReference>
<dbReference type="HOGENOM" id="CLU_004217_2_2_9"/>
<dbReference type="OrthoDB" id="9804305at2"/>
<dbReference type="Proteomes" id="UP000001258">
    <property type="component" value="Chromosome"/>
</dbReference>
<dbReference type="GO" id="GO:0005829">
    <property type="term" value="C:cytosol"/>
    <property type="evidence" value="ECO:0007669"/>
    <property type="project" value="TreeGrafter"/>
</dbReference>
<dbReference type="GO" id="GO:0000175">
    <property type="term" value="F:3'-5'-RNA exonuclease activity"/>
    <property type="evidence" value="ECO:0007669"/>
    <property type="project" value="TreeGrafter"/>
</dbReference>
<dbReference type="GO" id="GO:0000287">
    <property type="term" value="F:magnesium ion binding"/>
    <property type="evidence" value="ECO:0007669"/>
    <property type="project" value="UniProtKB-UniRule"/>
</dbReference>
<dbReference type="GO" id="GO:0004654">
    <property type="term" value="F:polyribonucleotide nucleotidyltransferase activity"/>
    <property type="evidence" value="ECO:0007669"/>
    <property type="project" value="UniProtKB-UniRule"/>
</dbReference>
<dbReference type="GO" id="GO:0003723">
    <property type="term" value="F:RNA binding"/>
    <property type="evidence" value="ECO:0007669"/>
    <property type="project" value="UniProtKB-UniRule"/>
</dbReference>
<dbReference type="GO" id="GO:0006402">
    <property type="term" value="P:mRNA catabolic process"/>
    <property type="evidence" value="ECO:0007669"/>
    <property type="project" value="UniProtKB-UniRule"/>
</dbReference>
<dbReference type="GO" id="GO:0006396">
    <property type="term" value="P:RNA processing"/>
    <property type="evidence" value="ECO:0007669"/>
    <property type="project" value="InterPro"/>
</dbReference>
<dbReference type="CDD" id="cd02393">
    <property type="entry name" value="KH-I_PNPase"/>
    <property type="match status" value="1"/>
</dbReference>
<dbReference type="CDD" id="cd11363">
    <property type="entry name" value="RNase_PH_PNPase_1"/>
    <property type="match status" value="1"/>
</dbReference>
<dbReference type="CDD" id="cd11364">
    <property type="entry name" value="RNase_PH_PNPase_2"/>
    <property type="match status" value="1"/>
</dbReference>
<dbReference type="CDD" id="cd04472">
    <property type="entry name" value="S1_PNPase"/>
    <property type="match status" value="1"/>
</dbReference>
<dbReference type="FunFam" id="2.40.50.140:FF:000023">
    <property type="entry name" value="Polyribonucleotide nucleotidyltransferase"/>
    <property type="match status" value="1"/>
</dbReference>
<dbReference type="FunFam" id="3.30.1370.10:FF:000001">
    <property type="entry name" value="Polyribonucleotide nucleotidyltransferase"/>
    <property type="match status" value="1"/>
</dbReference>
<dbReference type="FunFam" id="3.30.230.70:FF:000001">
    <property type="entry name" value="Polyribonucleotide nucleotidyltransferase"/>
    <property type="match status" value="1"/>
</dbReference>
<dbReference type="FunFam" id="3.30.230.70:FF:000002">
    <property type="entry name" value="Polyribonucleotide nucleotidyltransferase"/>
    <property type="match status" value="1"/>
</dbReference>
<dbReference type="Gene3D" id="3.30.230.70">
    <property type="entry name" value="GHMP Kinase, N-terminal domain"/>
    <property type="match status" value="2"/>
</dbReference>
<dbReference type="Gene3D" id="3.30.1370.10">
    <property type="entry name" value="K Homology domain, type 1"/>
    <property type="match status" value="1"/>
</dbReference>
<dbReference type="Gene3D" id="2.40.50.140">
    <property type="entry name" value="Nucleic acid-binding proteins"/>
    <property type="match status" value="1"/>
</dbReference>
<dbReference type="HAMAP" id="MF_01595">
    <property type="entry name" value="PNPase"/>
    <property type="match status" value="1"/>
</dbReference>
<dbReference type="InterPro" id="IPR001247">
    <property type="entry name" value="ExoRNase_PH_dom1"/>
</dbReference>
<dbReference type="InterPro" id="IPR015847">
    <property type="entry name" value="ExoRNase_PH_dom2"/>
</dbReference>
<dbReference type="InterPro" id="IPR036345">
    <property type="entry name" value="ExoRNase_PH_dom2_sf"/>
</dbReference>
<dbReference type="InterPro" id="IPR004087">
    <property type="entry name" value="KH_dom"/>
</dbReference>
<dbReference type="InterPro" id="IPR004088">
    <property type="entry name" value="KH_dom_type_1"/>
</dbReference>
<dbReference type="InterPro" id="IPR036612">
    <property type="entry name" value="KH_dom_type_1_sf"/>
</dbReference>
<dbReference type="InterPro" id="IPR012340">
    <property type="entry name" value="NA-bd_OB-fold"/>
</dbReference>
<dbReference type="InterPro" id="IPR012162">
    <property type="entry name" value="PNPase"/>
</dbReference>
<dbReference type="InterPro" id="IPR027408">
    <property type="entry name" value="PNPase/RNase_PH_dom_sf"/>
</dbReference>
<dbReference type="InterPro" id="IPR015848">
    <property type="entry name" value="PNPase_PH_RNA-bd_bac/org-type"/>
</dbReference>
<dbReference type="InterPro" id="IPR020568">
    <property type="entry name" value="Ribosomal_Su5_D2-typ_SF"/>
</dbReference>
<dbReference type="InterPro" id="IPR003029">
    <property type="entry name" value="S1_domain"/>
</dbReference>
<dbReference type="NCBIfam" id="TIGR03591">
    <property type="entry name" value="polynuc_phos"/>
    <property type="match status" value="1"/>
</dbReference>
<dbReference type="NCBIfam" id="NF008805">
    <property type="entry name" value="PRK11824.1"/>
    <property type="match status" value="1"/>
</dbReference>
<dbReference type="PANTHER" id="PTHR11252">
    <property type="entry name" value="POLYRIBONUCLEOTIDE NUCLEOTIDYLTRANSFERASE"/>
    <property type="match status" value="1"/>
</dbReference>
<dbReference type="PANTHER" id="PTHR11252:SF0">
    <property type="entry name" value="POLYRIBONUCLEOTIDE NUCLEOTIDYLTRANSFERASE 1, MITOCHONDRIAL"/>
    <property type="match status" value="1"/>
</dbReference>
<dbReference type="Pfam" id="PF00013">
    <property type="entry name" value="KH_1"/>
    <property type="match status" value="1"/>
</dbReference>
<dbReference type="Pfam" id="PF03726">
    <property type="entry name" value="PNPase"/>
    <property type="match status" value="1"/>
</dbReference>
<dbReference type="Pfam" id="PF01138">
    <property type="entry name" value="RNase_PH"/>
    <property type="match status" value="2"/>
</dbReference>
<dbReference type="Pfam" id="PF03725">
    <property type="entry name" value="RNase_PH_C"/>
    <property type="match status" value="2"/>
</dbReference>
<dbReference type="Pfam" id="PF00575">
    <property type="entry name" value="S1"/>
    <property type="match status" value="1"/>
</dbReference>
<dbReference type="PIRSF" id="PIRSF005499">
    <property type="entry name" value="PNPase"/>
    <property type="match status" value="1"/>
</dbReference>
<dbReference type="SMART" id="SM00322">
    <property type="entry name" value="KH"/>
    <property type="match status" value="1"/>
</dbReference>
<dbReference type="SMART" id="SM00316">
    <property type="entry name" value="S1"/>
    <property type="match status" value="1"/>
</dbReference>
<dbReference type="SUPFAM" id="SSF54791">
    <property type="entry name" value="Eukaryotic type KH-domain (KH-domain type I)"/>
    <property type="match status" value="1"/>
</dbReference>
<dbReference type="SUPFAM" id="SSF50249">
    <property type="entry name" value="Nucleic acid-binding proteins"/>
    <property type="match status" value="1"/>
</dbReference>
<dbReference type="SUPFAM" id="SSF55666">
    <property type="entry name" value="Ribonuclease PH domain 2-like"/>
    <property type="match status" value="2"/>
</dbReference>
<dbReference type="SUPFAM" id="SSF54211">
    <property type="entry name" value="Ribosomal protein S5 domain 2-like"/>
    <property type="match status" value="2"/>
</dbReference>
<dbReference type="PROSITE" id="PS50084">
    <property type="entry name" value="KH_TYPE_1"/>
    <property type="match status" value="1"/>
</dbReference>
<dbReference type="PROSITE" id="PS50126">
    <property type="entry name" value="S1"/>
    <property type="match status" value="1"/>
</dbReference>
<reference key="1">
    <citation type="journal article" date="2000" name="Nucleic Acids Res.">
        <title>Complete genome sequence of the alkaliphilic bacterium Bacillus halodurans and genomic sequence comparison with Bacillus subtilis.</title>
        <authorList>
            <person name="Takami H."/>
            <person name="Nakasone K."/>
            <person name="Takaki Y."/>
            <person name="Maeno G."/>
            <person name="Sasaki R."/>
            <person name="Masui N."/>
            <person name="Fuji F."/>
            <person name="Hirama C."/>
            <person name="Nakamura Y."/>
            <person name="Ogasawara N."/>
            <person name="Kuhara S."/>
            <person name="Horikoshi K."/>
        </authorList>
    </citation>
    <scope>NUCLEOTIDE SEQUENCE [LARGE SCALE GENOMIC DNA]</scope>
    <source>
        <strain>ATCC BAA-125 / DSM 18197 / FERM 7344 / JCM 9153 / C-125</strain>
    </source>
</reference>
<name>PNP_HALH5</name>
<proteinExistence type="inferred from homology"/>
<gene>
    <name evidence="1" type="primary">pnp</name>
    <name type="ordered locus">BH2407</name>
</gene>
<accession>Q9KA83</accession>
<comment type="function">
    <text evidence="1">Involved in mRNA degradation. Catalyzes the phosphorolysis of single-stranded polyribonucleotides processively in the 3'- to 5'-direction.</text>
</comment>
<comment type="catalytic activity">
    <reaction evidence="1">
        <text>RNA(n+1) + phosphate = RNA(n) + a ribonucleoside 5'-diphosphate</text>
        <dbReference type="Rhea" id="RHEA:22096"/>
        <dbReference type="Rhea" id="RHEA-COMP:14527"/>
        <dbReference type="Rhea" id="RHEA-COMP:17342"/>
        <dbReference type="ChEBI" id="CHEBI:43474"/>
        <dbReference type="ChEBI" id="CHEBI:57930"/>
        <dbReference type="ChEBI" id="CHEBI:140395"/>
        <dbReference type="EC" id="2.7.7.8"/>
    </reaction>
</comment>
<comment type="cofactor">
    <cofactor evidence="1">
        <name>Mg(2+)</name>
        <dbReference type="ChEBI" id="CHEBI:18420"/>
    </cofactor>
</comment>
<comment type="subcellular location">
    <subcellularLocation>
        <location evidence="1">Cytoplasm</location>
    </subcellularLocation>
</comment>
<comment type="similarity">
    <text evidence="1">Belongs to the polyribonucleotide nucleotidyltransferase family.</text>
</comment>
<protein>
    <recommendedName>
        <fullName evidence="1">Polyribonucleotide nucleotidyltransferase</fullName>
        <ecNumber evidence="1">2.7.7.8</ecNumber>
    </recommendedName>
    <alternativeName>
        <fullName evidence="1">Polynucleotide phosphorylase</fullName>
        <shortName evidence="1">PNPase</shortName>
    </alternativeName>
</protein>
<sequence>MEQERHEFSIDWAGRKLTVETGQLAKQANGAVLVRYGDTAVLSTATASKEPKDLPFFPLTVNYEERLYAAGKIPGGFIKREGRPSEKAILASRLIDRPIRPLFPEGFRNEVQVISIVMSVDQDCSSEMAAMVGSSLALSISDIPFEGPIAGVTVGRIDGQFVINPTQDQLEKSDIHLVVAGTKDAINMVEAGAEEVPEDVMLEAIMFGHNEIKRLIEFQEKIAAEVGKSKTDVVLKQVDPMLEQEVRVKAEEDLKQAVQVPEKHARQDAIEAVMDKVLETYEDNEDVPLSEVNEILHKIVKEEVRRLITVEKIRPDGREIDEIRPLSSQVGILPRTHGSGLFTRGQTQALSICTLGALGDVQILDGLGIEESKRFMHHYNFPQFSVGETGPIRGPGRREIGHGALGERALEPVIPSEQDFPYTIRLVSEVLESNGSTSQASICASTLAMMDAGVPIKAPVAGIAMGLVKQDEHVSVLTDIQGMEDALGDMDFKVAGTRKGVTALQMDIKISGIDRAILEQALEQARKGRMIILDNMLEAISESRSELSPYAPKILTMTINPDKIRDVIGPSGKMINKIIEDTGVKIDIEQDGTIYISSADTNMNNKAREIIEDIVREVEVGQMYLGTVKRIEKFGAFVELFKGKDGLVHISQLAEERVNKVEDVVKIGDEILVKVMEIDNQGRVNLSRKAVLKEQKKAEEQNQK</sequence>
<evidence type="ECO:0000255" key="1">
    <source>
        <dbReference type="HAMAP-Rule" id="MF_01595"/>
    </source>
</evidence>